<name>SIP5_VANPO</name>
<feature type="chain" id="PRO_0000333444" description="Protein SIP5">
    <location>
        <begin position="1"/>
        <end position="479"/>
    </location>
</feature>
<feature type="region of interest" description="Disordered" evidence="2">
    <location>
        <begin position="1"/>
        <end position="62"/>
    </location>
</feature>
<feature type="compositionally biased region" description="Low complexity" evidence="2">
    <location>
        <begin position="13"/>
        <end position="31"/>
    </location>
</feature>
<feature type="compositionally biased region" description="Polar residues" evidence="2">
    <location>
        <begin position="32"/>
        <end position="53"/>
    </location>
</feature>
<keyword id="KW-0963">Cytoplasm</keyword>
<keyword id="KW-1185">Reference proteome</keyword>
<reference key="1">
    <citation type="journal article" date="2007" name="Proc. Natl. Acad. Sci. U.S.A.">
        <title>Independent sorting-out of thousands of duplicated gene pairs in two yeast species descended from a whole-genome duplication.</title>
        <authorList>
            <person name="Scannell D.R."/>
            <person name="Frank A.C."/>
            <person name="Conant G.C."/>
            <person name="Byrne K.P."/>
            <person name="Woolfit M."/>
            <person name="Wolfe K.H."/>
        </authorList>
    </citation>
    <scope>NUCLEOTIDE SEQUENCE [LARGE SCALE GENOMIC DNA]</scope>
    <source>
        <strain>ATCC 22028 / DSM 70294 / BCRC 21397 / CBS 2163 / NBRC 10782 / NRRL Y-8283 / UCD 57-17</strain>
    </source>
</reference>
<proteinExistence type="inferred from homology"/>
<accession>A7TL97</accession>
<comment type="function">
    <text evidence="1">May negatively regulate the SNF1 kinase.</text>
</comment>
<comment type="subcellular location">
    <subcellularLocation>
        <location evidence="1">Cytoplasm</location>
    </subcellularLocation>
</comment>
<comment type="similarity">
    <text evidence="3">Belongs to the SIP5 family.</text>
</comment>
<sequence length="479" mass="54375">MGNVPTKLEEPQNPSSRLKSSSFSNSVSGNSDITDSPGSGNGRSSSQTKLNNARSKKKNASLSNGLLKSTTISSRKKDQLDREQFKEDHAAELLVKYYESVDGGFLAPFGCYSLEKLNYNPKIVKKLIIERKLAPFYTPLQDFNDNWTDEELIKIIDGLPLHASFNESLEEFEDIPTGDLKSKDFDYLIDSSSLSKREQKKLHSKIFKARLHKKRIAWQEMENTYFLEKKLSNKNILSKSKDSSEDMNNHISNSSNDILNNIDISLPNDDLKLSLYQSGIECPICFLYYPKNLNYSKCCQQPICTECFVQIKRALPHFPHDDNEHNNEDDSEKDPHLLISEPANCPYCATPNFTISYSPIASRKTGINGVKQFYYKPPKANDDANLSNNTAKPVYLTSDTIRPDWEDKLNKERSRLQRRAANATAIHVSNQLISPGRSENNEIPSNLKELENQMIEQAIKLSLQDRKQNESGSRKKSSK</sequence>
<organism>
    <name type="scientific">Vanderwaltozyma polyspora (strain ATCC 22028 / DSM 70294 / BCRC 21397 / CBS 2163 / NBRC 10782 / NRRL Y-8283 / UCD 57-17)</name>
    <name type="common">Kluyveromyces polysporus</name>
    <dbReference type="NCBI Taxonomy" id="436907"/>
    <lineage>
        <taxon>Eukaryota</taxon>
        <taxon>Fungi</taxon>
        <taxon>Dikarya</taxon>
        <taxon>Ascomycota</taxon>
        <taxon>Saccharomycotina</taxon>
        <taxon>Saccharomycetes</taxon>
        <taxon>Saccharomycetales</taxon>
        <taxon>Saccharomycetaceae</taxon>
        <taxon>Vanderwaltozyma</taxon>
    </lineage>
</organism>
<dbReference type="EMBL" id="DS480413">
    <property type="protein sequence ID" value="EDO16972.1"/>
    <property type="molecule type" value="Genomic_DNA"/>
</dbReference>
<dbReference type="RefSeq" id="XP_001644830.1">
    <property type="nucleotide sequence ID" value="XM_001644780.1"/>
</dbReference>
<dbReference type="FunCoup" id="A7TL97">
    <property type="interactions" value="64"/>
</dbReference>
<dbReference type="STRING" id="436907.A7TL97"/>
<dbReference type="GeneID" id="5545157"/>
<dbReference type="KEGG" id="vpo:Kpol_1041p30"/>
<dbReference type="eggNOG" id="KOG2789">
    <property type="taxonomic scope" value="Eukaryota"/>
</dbReference>
<dbReference type="HOGENOM" id="CLU_009068_2_0_1"/>
<dbReference type="InParanoid" id="A7TL97"/>
<dbReference type="OMA" id="ISEPANC"/>
<dbReference type="OrthoDB" id="21471at2759"/>
<dbReference type="PhylomeDB" id="A7TL97"/>
<dbReference type="Proteomes" id="UP000000267">
    <property type="component" value="Unassembled WGS sequence"/>
</dbReference>
<dbReference type="GO" id="GO:0005737">
    <property type="term" value="C:cytoplasm"/>
    <property type="evidence" value="ECO:0007669"/>
    <property type="project" value="UniProtKB-SubCell"/>
</dbReference>
<dbReference type="CDD" id="cd24139">
    <property type="entry name" value="SIP5-like"/>
    <property type="match status" value="1"/>
</dbReference>
<dbReference type="InterPro" id="IPR039301">
    <property type="entry name" value="Sip5/DA2"/>
</dbReference>
<dbReference type="PANTHER" id="PTHR31315">
    <property type="entry name" value="PROTEIN SIP5"/>
    <property type="match status" value="1"/>
</dbReference>
<dbReference type="PANTHER" id="PTHR31315:SF1">
    <property type="entry name" value="PROTEIN SIP5"/>
    <property type="match status" value="1"/>
</dbReference>
<evidence type="ECO:0000250" key="1"/>
<evidence type="ECO:0000256" key="2">
    <source>
        <dbReference type="SAM" id="MobiDB-lite"/>
    </source>
</evidence>
<evidence type="ECO:0000305" key="3"/>
<protein>
    <recommendedName>
        <fullName>Protein SIP5</fullName>
    </recommendedName>
</protein>
<gene>
    <name type="primary">SIP5</name>
    <name type="ORF">Kpol_1041p30</name>
</gene>